<feature type="chain" id="PRO_0000288472" description="Bis(5'-adenosyl)-triphosphatase">
    <location>
        <begin position="1"/>
        <end position="149"/>
    </location>
</feature>
<feature type="domain" description="HIT" evidence="3">
    <location>
        <begin position="2"/>
        <end position="109"/>
    </location>
</feature>
<feature type="short sequence motif" description="Histidine triad motif" evidence="3">
    <location>
        <begin position="94"/>
        <end position="98"/>
    </location>
</feature>
<feature type="active site" description="Tele-AMP-histidine intermediate" evidence="2">
    <location>
        <position position="96"/>
    </location>
</feature>
<feature type="binding site" evidence="2">
    <location>
        <position position="8"/>
    </location>
    <ligand>
        <name>substrate</name>
    </ligand>
</feature>
<feature type="binding site" evidence="2">
    <location>
        <position position="27"/>
    </location>
    <ligand>
        <name>substrate</name>
    </ligand>
</feature>
<feature type="binding site" evidence="2">
    <location>
        <position position="83"/>
    </location>
    <ligand>
        <name>substrate</name>
    </ligand>
</feature>
<feature type="binding site" evidence="2">
    <location>
        <begin position="89"/>
        <end position="92"/>
    </location>
    <ligand>
        <name>substrate</name>
    </ligand>
</feature>
<feature type="binding site" evidence="2">
    <location>
        <position position="98"/>
    </location>
    <ligand>
        <name>substrate</name>
    </ligand>
</feature>
<feature type="site" description="Important for induction of apoptosis" evidence="2">
    <location>
        <position position="114"/>
    </location>
</feature>
<feature type="modified residue" description="Phosphotyrosine" evidence="2">
    <location>
        <position position="114"/>
    </location>
</feature>
<feature type="modified residue" description="Phosphotyrosine" evidence="2">
    <location>
        <position position="147"/>
    </location>
</feature>
<comment type="function">
    <text evidence="1 2">Possesses dinucleoside triphosphate hydrolase activity (By similarity). Cleaves P(1)-P(3)-bis(5'-adenosyl) triphosphate (Ap3A) to yield AMP and ADP (By similarity). Can also hydrolyze P(1)-P(4)-bis(5'-adenosyl) tetraphosphate (Ap4A), but has extremely low activity with ATP (By similarity). Exhibits adenylylsulfatase activity, hydrolyzing adenosine 5'-phosphosulfate to yield AMP and sulfate (By similarity). Exhibits adenosine 5'-monophosphoramidase activity, hydrolyzing purine nucleotide phosphoramidates with a single phosphate group such as adenosine 5'monophosphoramidate (AMP-NH2) to yield AMP and NH2 (By similarity). Exhibits adenylylsulfate-ammonia adenylyltransferase, catalyzing the ammonolysis of adenosine 5'-phosphosulfate resulting in the formation of adenosine 5'-phosphoramidate (By similarity). Also catalyzes the ammonolysis of adenosine 5-phosphorofluoridate and diadenosine triphosphate (By similarity). Modulates transcriptional activation by CTNNB1 and thereby contributes to regulate the expression of genes essential for cell proliferation and survival, such as CCND1 and BIRC5 (By similarity). Plays a role in the induction of apoptosis via SRC and AKT1 signaling pathways (By similarity). Inhibits MDM2-mediated proteasomal degradation of p53/TP53 and thereby plays a role in p53/TP53-mediated apoptosis (By similarity). Induction of apoptosis depends on the ability of FHIT to bind P(1)-P(3)-bis(5'-adenosyl) triphosphate or related compounds, but does not require its catalytic activity (By similarity) Functions as a tumor suppressor (By similarity).</text>
</comment>
<comment type="catalytic activity">
    <reaction evidence="2">
        <text>P(1),P(3)-bis(5'-adenosyl) triphosphate + H2O = AMP + ADP + 2 H(+)</text>
        <dbReference type="Rhea" id="RHEA:13893"/>
        <dbReference type="ChEBI" id="CHEBI:15377"/>
        <dbReference type="ChEBI" id="CHEBI:15378"/>
        <dbReference type="ChEBI" id="CHEBI:58529"/>
        <dbReference type="ChEBI" id="CHEBI:456215"/>
        <dbReference type="ChEBI" id="CHEBI:456216"/>
        <dbReference type="EC" id="3.6.1.29"/>
    </reaction>
</comment>
<comment type="catalytic activity">
    <reaction evidence="2">
        <text>adenosine 5'-phosphosulfate + H2O = sulfate + AMP + 2 H(+)</text>
        <dbReference type="Rhea" id="RHEA:17041"/>
        <dbReference type="ChEBI" id="CHEBI:15377"/>
        <dbReference type="ChEBI" id="CHEBI:15378"/>
        <dbReference type="ChEBI" id="CHEBI:16189"/>
        <dbReference type="ChEBI" id="CHEBI:58243"/>
        <dbReference type="ChEBI" id="CHEBI:456215"/>
        <dbReference type="EC" id="3.6.2.1"/>
    </reaction>
</comment>
<comment type="catalytic activity">
    <reaction evidence="2">
        <text>adenosine 5'-phosphosulfate + NH4(+) = adenosine 5'-phosphoramidate + sulfate + 2 H(+)</text>
        <dbReference type="Rhea" id="RHEA:19197"/>
        <dbReference type="ChEBI" id="CHEBI:15378"/>
        <dbReference type="ChEBI" id="CHEBI:16189"/>
        <dbReference type="ChEBI" id="CHEBI:28938"/>
        <dbReference type="ChEBI" id="CHEBI:57890"/>
        <dbReference type="ChEBI" id="CHEBI:58243"/>
        <dbReference type="EC" id="2.7.7.51"/>
    </reaction>
</comment>
<comment type="catalytic activity">
    <reaction evidence="2">
        <text>adenosine 5'-phosphoramidate + H2O = AMP + NH4(+)</text>
        <dbReference type="Rhea" id="RHEA:67916"/>
        <dbReference type="ChEBI" id="CHEBI:15377"/>
        <dbReference type="ChEBI" id="CHEBI:28938"/>
        <dbReference type="ChEBI" id="CHEBI:57890"/>
        <dbReference type="ChEBI" id="CHEBI:456215"/>
    </reaction>
</comment>
<comment type="subunit">
    <text evidence="2">Homodimer. Interacts with UBE2I. Interacts with MDM2. Interacts with CTNNB1. Identified in a complex with CTNNB1 and LEF1 (By similarity).</text>
</comment>
<comment type="subcellular location">
    <subcellularLocation>
        <location evidence="2">Cytoplasm</location>
    </subcellularLocation>
    <subcellularLocation>
        <location evidence="2">Nucleus</location>
    </subcellularLocation>
    <subcellularLocation>
        <location evidence="2">Mitochondrion</location>
    </subcellularLocation>
</comment>
<comment type="tissue specificity">
    <text evidence="4">Expressed in the brain, kidney, spleen, testis and lung.</text>
</comment>
<comment type="PTM">
    <text evidence="2">Phosphorylation at Tyr-114 by SRC is required for induction of apoptosis.</text>
</comment>
<protein>
    <recommendedName>
        <fullName>Bis(5'-adenosyl)-triphosphatase</fullName>
        <ecNumber evidence="2">3.6.1.29</ecNumber>
    </recommendedName>
    <alternativeName>
        <fullName>AP3A hydrolase</fullName>
        <shortName>AP3Aase</shortName>
    </alternativeName>
    <alternativeName>
        <fullName evidence="2">Adenosine 5'-monophosphoramidase FHIT</fullName>
        <ecNumber evidence="2">3.9.1.-</ecNumber>
    </alternativeName>
    <alternativeName>
        <fullName>Adenylylsulfatase</fullName>
        <ecNumber evidence="2">3.6.2.1</ecNumber>
    </alternativeName>
    <alternativeName>
        <fullName>Adenylylsulfate-ammonia adenylyltransferase</fullName>
        <ecNumber evidence="2">2.7.7.51</ecNumber>
    </alternativeName>
    <alternativeName>
        <fullName>Diadenosine 5',5'''-P1,P3-triphosphate hydrolase</fullName>
    </alternativeName>
    <alternativeName>
        <fullName>Dinucleosidetriphosphatase</fullName>
    </alternativeName>
    <alternativeName>
        <fullName>Fragile histidine triad protein</fullName>
    </alternativeName>
</protein>
<name>FHIT_BOVIN</name>
<organism>
    <name type="scientific">Bos taurus</name>
    <name type="common">Bovine</name>
    <dbReference type="NCBI Taxonomy" id="9913"/>
    <lineage>
        <taxon>Eukaryota</taxon>
        <taxon>Metazoa</taxon>
        <taxon>Chordata</taxon>
        <taxon>Craniata</taxon>
        <taxon>Vertebrata</taxon>
        <taxon>Euteleostomi</taxon>
        <taxon>Mammalia</taxon>
        <taxon>Eutheria</taxon>
        <taxon>Laurasiatheria</taxon>
        <taxon>Artiodactyla</taxon>
        <taxon>Ruminantia</taxon>
        <taxon>Pecora</taxon>
        <taxon>Bovidae</taxon>
        <taxon>Bovinae</taxon>
        <taxon>Bos</taxon>
    </lineage>
</organism>
<keyword id="KW-0053">Apoptosis</keyword>
<keyword id="KW-0963">Cytoplasm</keyword>
<keyword id="KW-0378">Hydrolase</keyword>
<keyword id="KW-0460">Magnesium</keyword>
<keyword id="KW-0464">Manganese</keyword>
<keyword id="KW-0496">Mitochondrion</keyword>
<keyword id="KW-0547">Nucleotide-binding</keyword>
<keyword id="KW-0539">Nucleus</keyword>
<keyword id="KW-0597">Phosphoprotein</keyword>
<keyword id="KW-1185">Reference proteome</keyword>
<keyword id="KW-0804">Transcription</keyword>
<keyword id="KW-0805">Transcription regulation</keyword>
<keyword id="KW-0808">Transferase</keyword>
<evidence type="ECO:0000250" key="1">
    <source>
        <dbReference type="UniProtKB" id="O89106"/>
    </source>
</evidence>
<evidence type="ECO:0000250" key="2">
    <source>
        <dbReference type="UniProtKB" id="P49789"/>
    </source>
</evidence>
<evidence type="ECO:0000255" key="3">
    <source>
        <dbReference type="PROSITE-ProRule" id="PRU00464"/>
    </source>
</evidence>
<evidence type="ECO:0000269" key="4">
    <source>
    </source>
</evidence>
<gene>
    <name type="primary">FHIT</name>
</gene>
<reference key="1">
    <citation type="journal article" date="2006" name="Proc. Natl. Acad. Sci. U.S.A.">
        <title>Evidence that bovine forebrain embryonic zinc finger-like gene influences immune response associated with mastitis resistance.</title>
        <authorList>
            <person name="Sugimoto M."/>
            <person name="Fujikawa A."/>
            <person name="Womack J.E."/>
            <person name="Sugimoto Y."/>
        </authorList>
    </citation>
    <scope>NUCLEOTIDE SEQUENCE [MRNA]</scope>
</reference>
<reference key="2">
    <citation type="journal article" date="2006" name="BMC Genomics">
        <title>Comparative genomic mapping of the bovine Fragile Histidine Triad (FHIT) tumour suppressor gene: characterization of a 2 Mb BAC contig covering the locus, complete annotation of the gene, analysis of cDNA and of physiological expression profiles.</title>
        <authorList>
            <person name="Uboldi C."/>
            <person name="Guidi E."/>
            <person name="Roperto S."/>
            <person name="Russo V."/>
            <person name="Roperto F."/>
            <person name="Di Meo G.P."/>
            <person name="Iannuzzi L."/>
            <person name="Floriot S."/>
            <person name="Boussaha M."/>
            <person name="Eggen A."/>
            <person name="Ferretti L."/>
        </authorList>
    </citation>
    <scope>NUCLEOTIDE SEQUENCE [MRNA]</scope>
    <scope>NUCLEOTIDE SEQUENCE [GENOMIC DNA] OF 1-116</scope>
    <scope>TISSUE SPECIFICITY</scope>
</reference>
<reference key="3">
    <citation type="submission" date="2007-06" db="EMBL/GenBank/DDBJ databases">
        <authorList>
            <consortium name="NIH - Mammalian Gene Collection (MGC) project"/>
        </authorList>
    </citation>
    <scope>NUCLEOTIDE SEQUENCE [LARGE SCALE MRNA]</scope>
    <source>
        <strain>Hereford</strain>
        <tissue>Basal ganglia</tissue>
    </source>
</reference>
<sequence length="149" mass="16951">MSFRFGQHLIKPSVVFLKTELSFALVNRKPVVPGHVLVCPLRPVERFRDMSPEEVADLFQAAQRVGTVVEKHFQGTSLTFSMQDGPEAGQTVKHVHVHILPRKAGDFHRNDSIYDALEKHDREDKDSPALWRSEEEMAAEAAALRVYFQ</sequence>
<dbReference type="EC" id="3.6.1.29" evidence="2"/>
<dbReference type="EC" id="3.9.1.-" evidence="2"/>
<dbReference type="EC" id="3.6.2.1" evidence="2"/>
<dbReference type="EC" id="2.7.7.51" evidence="2"/>
<dbReference type="EMBL" id="DQ335870">
    <property type="protein sequence ID" value="ABC61315.1"/>
    <property type="molecule type" value="mRNA"/>
</dbReference>
<dbReference type="EMBL" id="DQ310184">
    <property type="protein sequence ID" value="ABC61471.1"/>
    <property type="molecule type" value="mRNA"/>
</dbReference>
<dbReference type="EMBL" id="DQ310183">
    <property type="protein sequence ID" value="ABC61470.1"/>
    <property type="molecule type" value="mRNA"/>
</dbReference>
<dbReference type="EMBL" id="DQ310181">
    <property type="protein sequence ID" value="ABC61468.1"/>
    <property type="molecule type" value="mRNA"/>
</dbReference>
<dbReference type="EMBL" id="DQ310182">
    <property type="protein sequence ID" value="ABC61469.1"/>
    <property type="molecule type" value="mRNA"/>
</dbReference>
<dbReference type="EMBL" id="DQ310179">
    <property type="protein sequence ID" value="ABC68307.1"/>
    <property type="molecule type" value="Genomic_DNA"/>
</dbReference>
<dbReference type="EMBL" id="DQ310176">
    <property type="protein sequence ID" value="ABC68307.1"/>
    <property type="status" value="JOINED"/>
    <property type="molecule type" value="Genomic_DNA"/>
</dbReference>
<dbReference type="EMBL" id="DQ310177">
    <property type="protein sequence ID" value="ABC68307.1"/>
    <property type="status" value="JOINED"/>
    <property type="molecule type" value="Genomic_DNA"/>
</dbReference>
<dbReference type="EMBL" id="DQ310178">
    <property type="protein sequence ID" value="ABC68307.1"/>
    <property type="status" value="JOINED"/>
    <property type="molecule type" value="Genomic_DNA"/>
</dbReference>
<dbReference type="EMBL" id="BC147993">
    <property type="protein sequence ID" value="AAI47994.1"/>
    <property type="molecule type" value="mRNA"/>
</dbReference>
<dbReference type="RefSeq" id="NP_001035736.1">
    <property type="nucleotide sequence ID" value="NM_001040646.1"/>
</dbReference>
<dbReference type="RefSeq" id="XP_024838827.1">
    <property type="nucleotide sequence ID" value="XM_024983059.2"/>
</dbReference>
<dbReference type="RefSeq" id="XP_024838828.1">
    <property type="nucleotide sequence ID" value="XM_024983060.2"/>
</dbReference>
<dbReference type="RefSeq" id="XP_024838829.1">
    <property type="nucleotide sequence ID" value="XM_024983061.2"/>
</dbReference>
<dbReference type="RefSeq" id="XP_024838830.1">
    <property type="nucleotide sequence ID" value="XM_024983062.2"/>
</dbReference>
<dbReference type="RefSeq" id="XP_024838831.1">
    <property type="nucleotide sequence ID" value="XM_024983063.2"/>
</dbReference>
<dbReference type="RefSeq" id="XP_059735890.1">
    <property type="nucleotide sequence ID" value="XM_059879907.1"/>
</dbReference>
<dbReference type="SMR" id="Q1KZG4"/>
<dbReference type="FunCoup" id="Q1KZG4">
    <property type="interactions" value="374"/>
</dbReference>
<dbReference type="STRING" id="9913.ENSBTAP00000019177"/>
<dbReference type="PaxDb" id="9913-ENSBTAP00000019177"/>
<dbReference type="Ensembl" id="ENSBTAT00000135099.1">
    <property type="protein sequence ID" value="ENSBTAP00000086918.1"/>
    <property type="gene ID" value="ENSBTAG00000014418.7"/>
</dbReference>
<dbReference type="GeneID" id="692183"/>
<dbReference type="KEGG" id="bta:692183"/>
<dbReference type="CTD" id="2272"/>
<dbReference type="VEuPathDB" id="HostDB:ENSBTAG00000014418"/>
<dbReference type="VGNC" id="VGNC:28998">
    <property type="gene designation" value="FHIT"/>
</dbReference>
<dbReference type="eggNOG" id="KOG3379">
    <property type="taxonomic scope" value="Eukaryota"/>
</dbReference>
<dbReference type="GeneTree" id="ENSGT00940000163977"/>
<dbReference type="HOGENOM" id="CLU_056776_7_1_1"/>
<dbReference type="InParanoid" id="Q1KZG4"/>
<dbReference type="OMA" id="DAIYGMM"/>
<dbReference type="OrthoDB" id="680339at2759"/>
<dbReference type="TreeFam" id="TF105432"/>
<dbReference type="Proteomes" id="UP000009136">
    <property type="component" value="Chromosome 22"/>
</dbReference>
<dbReference type="Bgee" id="ENSBTAG00000014418">
    <property type="expression patterns" value="Expressed in oocyte and 102 other cell types or tissues"/>
</dbReference>
<dbReference type="GO" id="GO:0005737">
    <property type="term" value="C:cytoplasm"/>
    <property type="evidence" value="ECO:0000318"/>
    <property type="project" value="GO_Central"/>
</dbReference>
<dbReference type="GO" id="GO:0005829">
    <property type="term" value="C:cytosol"/>
    <property type="evidence" value="ECO:0000250"/>
    <property type="project" value="UniProtKB"/>
</dbReference>
<dbReference type="GO" id="GO:0005739">
    <property type="term" value="C:mitochondrion"/>
    <property type="evidence" value="ECO:0007669"/>
    <property type="project" value="UniProtKB-SubCell"/>
</dbReference>
<dbReference type="GO" id="GO:0005634">
    <property type="term" value="C:nucleus"/>
    <property type="evidence" value="ECO:0000318"/>
    <property type="project" value="GO_Central"/>
</dbReference>
<dbReference type="GO" id="GO:0005886">
    <property type="term" value="C:plasma membrane"/>
    <property type="evidence" value="ECO:0000318"/>
    <property type="project" value="GO_Central"/>
</dbReference>
<dbReference type="GO" id="GO:0043530">
    <property type="term" value="F:adenosine 5'-monophosphoramidase activity"/>
    <property type="evidence" value="ECO:0000250"/>
    <property type="project" value="UniProtKB"/>
</dbReference>
<dbReference type="GO" id="GO:0047627">
    <property type="term" value="F:adenylylsulfatase activity"/>
    <property type="evidence" value="ECO:0000250"/>
    <property type="project" value="UniProtKB"/>
</dbReference>
<dbReference type="GO" id="GO:0047352">
    <property type="term" value="F:adenylylsulfate-ammonia adenylyltransferase activity"/>
    <property type="evidence" value="ECO:0000250"/>
    <property type="project" value="UniProtKB"/>
</dbReference>
<dbReference type="GO" id="GO:0047710">
    <property type="term" value="F:bis(5'-adenosyl)-triphosphatase activity"/>
    <property type="evidence" value="ECO:0000250"/>
    <property type="project" value="UniProtKB"/>
</dbReference>
<dbReference type="GO" id="GO:0000166">
    <property type="term" value="F:nucleotide binding"/>
    <property type="evidence" value="ECO:0007669"/>
    <property type="project" value="UniProtKB-KW"/>
</dbReference>
<dbReference type="GO" id="GO:0031625">
    <property type="term" value="F:ubiquitin protein ligase binding"/>
    <property type="evidence" value="ECO:0000318"/>
    <property type="project" value="GO_Central"/>
</dbReference>
<dbReference type="GO" id="GO:0015964">
    <property type="term" value="P:diadenosine triphosphate catabolic process"/>
    <property type="evidence" value="ECO:0000318"/>
    <property type="project" value="GO_Central"/>
</dbReference>
<dbReference type="GO" id="GO:0072332">
    <property type="term" value="P:intrinsic apoptotic signaling pathway by p53 class mediator"/>
    <property type="evidence" value="ECO:0000250"/>
    <property type="project" value="UniProtKB"/>
</dbReference>
<dbReference type="GO" id="GO:0032435">
    <property type="term" value="P:negative regulation of proteasomal ubiquitin-dependent protein catabolic process"/>
    <property type="evidence" value="ECO:0000250"/>
    <property type="project" value="UniProtKB"/>
</dbReference>
<dbReference type="GO" id="GO:0006163">
    <property type="term" value="P:purine nucleotide metabolic process"/>
    <property type="evidence" value="ECO:0000250"/>
    <property type="project" value="UniProtKB"/>
</dbReference>
<dbReference type="CDD" id="cd01275">
    <property type="entry name" value="FHIT"/>
    <property type="match status" value="1"/>
</dbReference>
<dbReference type="FunFam" id="3.30.428.10:FF:000011">
    <property type="entry name" value="Fragile histidine triad"/>
    <property type="match status" value="1"/>
</dbReference>
<dbReference type="Gene3D" id="3.30.428.10">
    <property type="entry name" value="HIT-like"/>
    <property type="match status" value="1"/>
</dbReference>
<dbReference type="InterPro" id="IPR052677">
    <property type="entry name" value="Dinucleoside_ppp_hydrolase"/>
</dbReference>
<dbReference type="InterPro" id="IPR039383">
    <property type="entry name" value="FHIT"/>
</dbReference>
<dbReference type="InterPro" id="IPR019808">
    <property type="entry name" value="Histidine_triad_CS"/>
</dbReference>
<dbReference type="InterPro" id="IPR011146">
    <property type="entry name" value="HIT-like"/>
</dbReference>
<dbReference type="InterPro" id="IPR036265">
    <property type="entry name" value="HIT-like_sf"/>
</dbReference>
<dbReference type="PANTHER" id="PTHR46981">
    <property type="entry name" value="BIS(5'-ADENOSYL)-TRIPHOSPHATASE"/>
    <property type="match status" value="1"/>
</dbReference>
<dbReference type="PANTHER" id="PTHR46981:SF1">
    <property type="entry name" value="BIS(5'-ADENOSYL)-TRIPHOSPHATASE"/>
    <property type="match status" value="1"/>
</dbReference>
<dbReference type="Pfam" id="PF01230">
    <property type="entry name" value="HIT"/>
    <property type="match status" value="1"/>
</dbReference>
<dbReference type="SUPFAM" id="SSF54197">
    <property type="entry name" value="HIT-like"/>
    <property type="match status" value="1"/>
</dbReference>
<dbReference type="PROSITE" id="PS00892">
    <property type="entry name" value="HIT_1"/>
    <property type="match status" value="1"/>
</dbReference>
<dbReference type="PROSITE" id="PS51084">
    <property type="entry name" value="HIT_2"/>
    <property type="match status" value="1"/>
</dbReference>
<proteinExistence type="evidence at transcript level"/>
<accession>Q1KZG4</accession>
<accession>A6QLK1</accession>
<accession>Q1KZS9</accession>